<comment type="function">
    <text evidence="1">Exhibits S-adenosyl-L-methionine-dependent methyltransferase activity.</text>
</comment>
<comment type="similarity">
    <text evidence="2">Belongs to the UPF0677 family.</text>
</comment>
<comment type="sequence caution" evidence="2">
    <conflict type="frameshift">
        <sequence resource="EMBL-CDS" id="AAS06327"/>
    </conflict>
</comment>
<dbReference type="EC" id="2.1.1.-"/>
<dbReference type="EMBL" id="AE016958">
    <property type="protein sequence ID" value="AAS06327.1"/>
    <property type="status" value="ALT_FRAME"/>
    <property type="molecule type" value="Genomic_DNA"/>
</dbReference>
<dbReference type="SMR" id="Q73TE1"/>
<dbReference type="STRING" id="262316.MAP_3777"/>
<dbReference type="KEGG" id="mpa:MAP_3777"/>
<dbReference type="eggNOG" id="COG3315">
    <property type="taxonomic scope" value="Bacteria"/>
</dbReference>
<dbReference type="HOGENOM" id="CLU_056160_2_2_11"/>
<dbReference type="Proteomes" id="UP000000580">
    <property type="component" value="Chromosome"/>
</dbReference>
<dbReference type="GO" id="GO:0008168">
    <property type="term" value="F:methyltransferase activity"/>
    <property type="evidence" value="ECO:0007669"/>
    <property type="project" value="UniProtKB-KW"/>
</dbReference>
<dbReference type="GO" id="GO:0032259">
    <property type="term" value="P:methylation"/>
    <property type="evidence" value="ECO:0007669"/>
    <property type="project" value="UniProtKB-KW"/>
</dbReference>
<dbReference type="FunFam" id="3.40.50.150:FF:000152">
    <property type="entry name" value="S-adenosyl-L-methionine-dependent methyltransferase"/>
    <property type="match status" value="1"/>
</dbReference>
<dbReference type="Gene3D" id="3.40.50.150">
    <property type="entry name" value="Vaccinia Virus protein VP39"/>
    <property type="match status" value="1"/>
</dbReference>
<dbReference type="InterPro" id="IPR007213">
    <property type="entry name" value="Ppm1/Ppm2/Tcmp"/>
</dbReference>
<dbReference type="InterPro" id="IPR029063">
    <property type="entry name" value="SAM-dependent_MTases_sf"/>
</dbReference>
<dbReference type="InterPro" id="IPR011610">
    <property type="entry name" value="SAM_mthyl_Trfase_ML2640-like"/>
</dbReference>
<dbReference type="NCBIfam" id="TIGR00027">
    <property type="entry name" value="mthyl_TIGR00027"/>
    <property type="match status" value="1"/>
</dbReference>
<dbReference type="PANTHER" id="PTHR43619">
    <property type="entry name" value="S-ADENOSYL-L-METHIONINE-DEPENDENT METHYLTRANSFERASE YKTD-RELATED"/>
    <property type="match status" value="1"/>
</dbReference>
<dbReference type="PANTHER" id="PTHR43619:SF2">
    <property type="entry name" value="S-ADENOSYL-L-METHIONINE-DEPENDENT METHYLTRANSFERASES SUPERFAMILY PROTEIN"/>
    <property type="match status" value="1"/>
</dbReference>
<dbReference type="Pfam" id="PF04072">
    <property type="entry name" value="LCM"/>
    <property type="match status" value="1"/>
</dbReference>
<dbReference type="SUPFAM" id="SSF53335">
    <property type="entry name" value="S-adenosyl-L-methionine-dependent methyltransferases"/>
    <property type="match status" value="1"/>
</dbReference>
<protein>
    <recommendedName>
        <fullName>Putative S-adenosyl-L-methionine-dependent methyltransferase MAP_3777</fullName>
        <ecNumber>2.1.1.-</ecNumber>
    </recommendedName>
</protein>
<accession>Q73TE1</accession>
<proteinExistence type="inferred from homology"/>
<sequence>MRSEGDTWDITTSVGSTALFVATARALEAQKPDPLAVDPYAEIFCRAVGGTAADVLDGKDPDHQLKTTDFGENFVNFQGARTRYFDNYFARTADAGVRQVVVLAAGLDSRAYRLDWPAATTIFELDQPQVLDFKREVLARAGAQPRAERREIAIDLREDWPQALRDSGFDPAKPSAWIAEGLLIYLPASAQEQLFTGIDGLAGHGSHVAVEDGAPMKPEDFETAVAEERAATAQGDQRVFFQLVYNEQCAPATEWFGNRGWTAVGTPLADYLREVGRPVPGPETEAGPMIARNTLVSAVRA</sequence>
<gene>
    <name type="ordered locus">MAP_3777</name>
</gene>
<feature type="chain" id="PRO_0000361182" description="Putative S-adenosyl-L-methionine-dependent methyltransferase MAP_3777">
    <location>
        <begin position="1"/>
        <end position="301"/>
    </location>
</feature>
<feature type="binding site" evidence="1">
    <location>
        <position position="126"/>
    </location>
    <ligand>
        <name>S-adenosyl-L-methionine</name>
        <dbReference type="ChEBI" id="CHEBI:59789"/>
    </ligand>
</feature>
<feature type="binding site" evidence="1">
    <location>
        <begin position="155"/>
        <end position="156"/>
    </location>
    <ligand>
        <name>S-adenosyl-L-methionine</name>
        <dbReference type="ChEBI" id="CHEBI:59789"/>
    </ligand>
</feature>
<name>Y3777_MYCPA</name>
<evidence type="ECO:0000250" key="1"/>
<evidence type="ECO:0000305" key="2"/>
<organism>
    <name type="scientific">Mycolicibacterium paratuberculosis (strain ATCC BAA-968 / K-10)</name>
    <name type="common">Mycobacterium paratuberculosis</name>
    <dbReference type="NCBI Taxonomy" id="262316"/>
    <lineage>
        <taxon>Bacteria</taxon>
        <taxon>Bacillati</taxon>
        <taxon>Actinomycetota</taxon>
        <taxon>Actinomycetes</taxon>
        <taxon>Mycobacteriales</taxon>
        <taxon>Mycobacteriaceae</taxon>
        <taxon>Mycobacterium</taxon>
        <taxon>Mycobacterium avium complex (MAC)</taxon>
    </lineage>
</organism>
<keyword id="KW-0489">Methyltransferase</keyword>
<keyword id="KW-1185">Reference proteome</keyword>
<keyword id="KW-0949">S-adenosyl-L-methionine</keyword>
<keyword id="KW-0808">Transferase</keyword>
<reference key="1">
    <citation type="journal article" date="2005" name="Proc. Natl. Acad. Sci. U.S.A.">
        <title>The complete genome sequence of Mycobacterium avium subspecies paratuberculosis.</title>
        <authorList>
            <person name="Li L."/>
            <person name="Bannantine J.P."/>
            <person name="Zhang Q."/>
            <person name="Amonsin A."/>
            <person name="May B.J."/>
            <person name="Alt D."/>
            <person name="Banerji N."/>
            <person name="Kanjilal S."/>
            <person name="Kapur V."/>
        </authorList>
    </citation>
    <scope>NUCLEOTIDE SEQUENCE [LARGE SCALE GENOMIC DNA]</scope>
    <source>
        <strain>ATCC BAA-968 / K-10</strain>
    </source>
</reference>